<gene>
    <name type="ordered locus">lmo0899</name>
</gene>
<protein>
    <recommendedName>
        <fullName evidence="1">Protein SprT-like</fullName>
    </recommendedName>
</protein>
<evidence type="ECO:0000255" key="1">
    <source>
        <dbReference type="HAMAP-Rule" id="MF_00745"/>
    </source>
</evidence>
<dbReference type="EMBL" id="AL591977">
    <property type="protein sequence ID" value="CAC98977.1"/>
    <property type="molecule type" value="Genomic_DNA"/>
</dbReference>
<dbReference type="PIR" id="AC1187">
    <property type="entry name" value="AC1187"/>
</dbReference>
<dbReference type="RefSeq" id="NP_464425.1">
    <property type="nucleotide sequence ID" value="NC_003210.1"/>
</dbReference>
<dbReference type="RefSeq" id="WP_003721466.1">
    <property type="nucleotide sequence ID" value="NZ_CP149495.1"/>
</dbReference>
<dbReference type="STRING" id="169963.gene:17593550"/>
<dbReference type="PaxDb" id="169963-lmo0899"/>
<dbReference type="DNASU" id="987820"/>
<dbReference type="EnsemblBacteria" id="CAC98977">
    <property type="protein sequence ID" value="CAC98977"/>
    <property type="gene ID" value="CAC98977"/>
</dbReference>
<dbReference type="GeneID" id="987820"/>
<dbReference type="KEGG" id="lmo:lmo0899"/>
<dbReference type="PATRIC" id="fig|169963.11.peg.924"/>
<dbReference type="eggNOG" id="COG3091">
    <property type="taxonomic scope" value="Bacteria"/>
</dbReference>
<dbReference type="HOGENOM" id="CLU_123820_0_0_9"/>
<dbReference type="OrthoDB" id="9799909at2"/>
<dbReference type="PhylomeDB" id="Q8Y8K2"/>
<dbReference type="BioCyc" id="LMON169963:LMO0899-MONOMER"/>
<dbReference type="Proteomes" id="UP000000817">
    <property type="component" value="Chromosome"/>
</dbReference>
<dbReference type="GO" id="GO:0005737">
    <property type="term" value="C:cytoplasm"/>
    <property type="evidence" value="ECO:0007669"/>
    <property type="project" value="UniProtKB-SubCell"/>
</dbReference>
<dbReference type="GO" id="GO:0008270">
    <property type="term" value="F:zinc ion binding"/>
    <property type="evidence" value="ECO:0007669"/>
    <property type="project" value="UniProtKB-UniRule"/>
</dbReference>
<dbReference type="GO" id="GO:0006950">
    <property type="term" value="P:response to stress"/>
    <property type="evidence" value="ECO:0007669"/>
    <property type="project" value="UniProtKB-ARBA"/>
</dbReference>
<dbReference type="HAMAP" id="MF_00745">
    <property type="entry name" value="SprT_like"/>
    <property type="match status" value="1"/>
</dbReference>
<dbReference type="InterPro" id="IPR006640">
    <property type="entry name" value="SprT-like_domain"/>
</dbReference>
<dbReference type="InterPro" id="IPR035240">
    <property type="entry name" value="SprT_Zn_ribbon"/>
</dbReference>
<dbReference type="InterPro" id="IPR023524">
    <property type="entry name" value="Uncharacterised_SprT-like"/>
</dbReference>
<dbReference type="NCBIfam" id="NF003339">
    <property type="entry name" value="PRK04351.1"/>
    <property type="match status" value="1"/>
</dbReference>
<dbReference type="Pfam" id="PF10263">
    <property type="entry name" value="SprT-like"/>
    <property type="match status" value="1"/>
</dbReference>
<dbReference type="Pfam" id="PF17283">
    <property type="entry name" value="Zn_ribbon_SprT"/>
    <property type="match status" value="1"/>
</dbReference>
<dbReference type="SMART" id="SM00731">
    <property type="entry name" value="SprT"/>
    <property type="match status" value="1"/>
</dbReference>
<keyword id="KW-0963">Cytoplasm</keyword>
<keyword id="KW-0479">Metal-binding</keyword>
<keyword id="KW-1185">Reference proteome</keyword>
<keyword id="KW-0862">Zinc</keyword>
<feature type="chain" id="PRO_0000213294" description="Protein SprT-like">
    <location>
        <begin position="1"/>
        <end position="155"/>
    </location>
</feature>
<feature type="domain" description="SprT-like" evidence="1">
    <location>
        <begin position="7"/>
        <end position="145"/>
    </location>
</feature>
<feature type="active site" evidence="1">
    <location>
        <position position="68"/>
    </location>
</feature>
<feature type="binding site" evidence="1">
    <location>
        <position position="67"/>
    </location>
    <ligand>
        <name>Zn(2+)</name>
        <dbReference type="ChEBI" id="CHEBI:29105"/>
    </ligand>
</feature>
<feature type="binding site" evidence="1">
    <location>
        <position position="71"/>
    </location>
    <ligand>
        <name>Zn(2+)</name>
        <dbReference type="ChEBI" id="CHEBI:29105"/>
    </ligand>
</feature>
<reference key="1">
    <citation type="journal article" date="2001" name="Science">
        <title>Comparative genomics of Listeria species.</title>
        <authorList>
            <person name="Glaser P."/>
            <person name="Frangeul L."/>
            <person name="Buchrieser C."/>
            <person name="Rusniok C."/>
            <person name="Amend A."/>
            <person name="Baquero F."/>
            <person name="Berche P."/>
            <person name="Bloecker H."/>
            <person name="Brandt P."/>
            <person name="Chakraborty T."/>
            <person name="Charbit A."/>
            <person name="Chetouani F."/>
            <person name="Couve E."/>
            <person name="de Daruvar A."/>
            <person name="Dehoux P."/>
            <person name="Domann E."/>
            <person name="Dominguez-Bernal G."/>
            <person name="Duchaud E."/>
            <person name="Durant L."/>
            <person name="Dussurget O."/>
            <person name="Entian K.-D."/>
            <person name="Fsihi H."/>
            <person name="Garcia-del Portillo F."/>
            <person name="Garrido P."/>
            <person name="Gautier L."/>
            <person name="Goebel W."/>
            <person name="Gomez-Lopez N."/>
            <person name="Hain T."/>
            <person name="Hauf J."/>
            <person name="Jackson D."/>
            <person name="Jones L.-M."/>
            <person name="Kaerst U."/>
            <person name="Kreft J."/>
            <person name="Kuhn M."/>
            <person name="Kunst F."/>
            <person name="Kurapkat G."/>
            <person name="Madueno E."/>
            <person name="Maitournam A."/>
            <person name="Mata Vicente J."/>
            <person name="Ng E."/>
            <person name="Nedjari H."/>
            <person name="Nordsiek G."/>
            <person name="Novella S."/>
            <person name="de Pablos B."/>
            <person name="Perez-Diaz J.-C."/>
            <person name="Purcell R."/>
            <person name="Remmel B."/>
            <person name="Rose M."/>
            <person name="Schlueter T."/>
            <person name="Simoes N."/>
            <person name="Tierrez A."/>
            <person name="Vazquez-Boland J.-A."/>
            <person name="Voss H."/>
            <person name="Wehland J."/>
            <person name="Cossart P."/>
        </authorList>
    </citation>
    <scope>NUCLEOTIDE SEQUENCE [LARGE SCALE GENOMIC DNA]</scope>
    <source>
        <strain>ATCC BAA-679 / EGD-e</strain>
    </source>
</reference>
<proteinExistence type="inferred from homology"/>
<comment type="cofactor">
    <cofactor evidence="1">
        <name>Zn(2+)</name>
        <dbReference type="ChEBI" id="CHEBI:29105"/>
    </cofactor>
    <text evidence="1">Binds 1 zinc ion.</text>
</comment>
<comment type="subcellular location">
    <subcellularLocation>
        <location evidence="1">Cytoplasm</location>
    </subcellularLocation>
</comment>
<comment type="similarity">
    <text evidence="1">Belongs to the SprT family.</text>
</comment>
<accession>Q8Y8K2</accession>
<sequence>MNQAELQRHMEEVSLQFFQKEFRHQAVFNARLRTTGGRYLLKSHNIEMNPKYLENFGLAYFIGIMKHELCHYHLHLEKKGYQHRDQDFRELLKKVDAPRFCATIPREITMHEYTCKSCGKSFLRQRRFNVNRYRCGSCGGKLIQTDSKKIYTENP</sequence>
<organism>
    <name type="scientific">Listeria monocytogenes serovar 1/2a (strain ATCC BAA-679 / EGD-e)</name>
    <dbReference type="NCBI Taxonomy" id="169963"/>
    <lineage>
        <taxon>Bacteria</taxon>
        <taxon>Bacillati</taxon>
        <taxon>Bacillota</taxon>
        <taxon>Bacilli</taxon>
        <taxon>Bacillales</taxon>
        <taxon>Listeriaceae</taxon>
        <taxon>Listeria</taxon>
    </lineage>
</organism>
<name>SPRTL_LISMO</name>